<feature type="peptide" id="PRO_0000365752" description="Tachykinin-related peptide 3" evidence="1">
    <location>
        <begin position="1"/>
        <end position="10"/>
    </location>
</feature>
<feature type="peptide" id="PRO_0000365753" description="Tachykinin-related peptide 3(3-10)" evidence="1">
    <location>
        <begin position="3"/>
        <end position="10"/>
    </location>
</feature>
<feature type="peptide" id="PRO_0000365754" description="Tachykinin-related peptide 3(4-10)" evidence="1">
    <location>
        <begin position="4"/>
        <end position="10"/>
    </location>
</feature>
<feature type="modified residue" description="Methionine sulfoxide" evidence="1">
    <location>
        <position position="9"/>
    </location>
</feature>
<feature type="modified residue" description="Arginine amide" evidence="1">
    <location>
        <position position="10"/>
    </location>
</feature>
<protein>
    <recommendedName>
        <fullName evidence="2">Tachykinin-related peptide 3</fullName>
        <shortName evidence="2">Rhopr-TRP-3</shortName>
    </recommendedName>
    <component>
        <recommendedName>
            <fullName evidence="2">Tachykinin-related peptide 3(3-10)</fullName>
            <shortName evidence="2">Rhopr-TRP-3(3-10)</shortName>
        </recommendedName>
    </component>
    <component>
        <recommendedName>
            <fullName evidence="2">Tachykinin-related peptide 3(4-10)</fullName>
            <shortName evidence="2">Rhopr-TRP-3(4-10)</shortName>
        </recommendedName>
    </component>
</protein>
<name>TRP3_RHOPR</name>
<comment type="function">
    <text evidence="3">Myoactive peptide. Increases the amplitude and frequency of spontaneous contractions and tonus of hindgut muscle.</text>
</comment>
<comment type="subcellular location">
    <subcellularLocation>
        <location evidence="3">Secreted</location>
    </subcellularLocation>
</comment>
<comment type="PTM">
    <text evidence="1">Tachykinin-related peptide 3(3-10) occurs in two forms, Rhopr-TRP-3(3-10) has unmodified Met-9 and Ox-Rhopr-TRP-3(3-10) has oxidation at Met-9.</text>
</comment>
<comment type="mass spectrometry">
    <molecule>Tachykinin-related peptide 3</molecule>
</comment>
<comment type="mass spectrometry">
    <molecule>Tachykinin-related peptide 3(3-10)</molecule>
</comment>
<comment type="mass spectrometry">
    <molecule>Tachykinin-related peptide 3(3-10)</molecule>
    <text>With oxidation at Met-9.</text>
</comment>
<comment type="mass spectrometry">
    <molecule>Tachykinin-related peptide 3(4-10)</molecule>
</comment>
<dbReference type="STRING" id="13249.P85804"/>
<dbReference type="InParanoid" id="P85804"/>
<dbReference type="Proteomes" id="UP000015103">
    <property type="component" value="Unassembled WGS sequence"/>
</dbReference>
<dbReference type="GO" id="GO:0005576">
    <property type="term" value="C:extracellular region"/>
    <property type="evidence" value="ECO:0007669"/>
    <property type="project" value="UniProtKB-SubCell"/>
</dbReference>
<dbReference type="GO" id="GO:0007218">
    <property type="term" value="P:neuropeptide signaling pathway"/>
    <property type="evidence" value="ECO:0007669"/>
    <property type="project" value="UniProtKB-KW"/>
</dbReference>
<organism>
    <name type="scientific">Rhodnius prolixus</name>
    <name type="common">Triatomid bug</name>
    <dbReference type="NCBI Taxonomy" id="13249"/>
    <lineage>
        <taxon>Eukaryota</taxon>
        <taxon>Metazoa</taxon>
        <taxon>Ecdysozoa</taxon>
        <taxon>Arthropoda</taxon>
        <taxon>Hexapoda</taxon>
        <taxon>Insecta</taxon>
        <taxon>Pterygota</taxon>
        <taxon>Neoptera</taxon>
        <taxon>Paraneoptera</taxon>
        <taxon>Hemiptera</taxon>
        <taxon>Heteroptera</taxon>
        <taxon>Panheteroptera</taxon>
        <taxon>Cimicomorpha</taxon>
        <taxon>Reduviidae</taxon>
        <taxon>Triatominae</taxon>
        <taxon>Rhodnius</taxon>
    </lineage>
</organism>
<reference evidence="3" key="1">
    <citation type="journal article" date="2009" name="Proteomics">
        <title>The neuropeptidome of Rhodnius prolixus brain.</title>
        <authorList>
            <person name="Ons S."/>
            <person name="Richter F."/>
            <person name="Urlaub H."/>
            <person name="Pomar R.R."/>
        </authorList>
    </citation>
    <scope>PROTEIN SEQUENCE</scope>
    <scope>MASS SPECTROMETRY</scope>
    <scope>OXIDATION AT MET-9</scope>
    <scope>AMIDATION AT ARG-10</scope>
    <source>
        <tissue evidence="1">Brain</tissue>
    </source>
</reference>
<evidence type="ECO:0000269" key="1">
    <source>
    </source>
</evidence>
<evidence type="ECO:0000303" key="2">
    <source>
    </source>
</evidence>
<evidence type="ECO:0000305" key="3"/>
<sequence>APASGFFGMR</sequence>
<keyword id="KW-0027">Amidation</keyword>
<keyword id="KW-0903">Direct protein sequencing</keyword>
<keyword id="KW-0527">Neuropeptide</keyword>
<keyword id="KW-0558">Oxidation</keyword>
<keyword id="KW-1185">Reference proteome</keyword>
<keyword id="KW-0964">Secreted</keyword>
<accession>P85804</accession>
<proteinExistence type="evidence at protein level"/>